<dbReference type="EMBL" id="CP000507">
    <property type="protein sequence ID" value="ABL99171.1"/>
    <property type="molecule type" value="Genomic_DNA"/>
</dbReference>
<dbReference type="RefSeq" id="WP_011759080.1">
    <property type="nucleotide sequence ID" value="NC_008700.1"/>
</dbReference>
<dbReference type="SMR" id="A1S465"/>
<dbReference type="STRING" id="326297.Sama_0964"/>
<dbReference type="KEGG" id="saz:Sama_0964"/>
<dbReference type="eggNOG" id="COG0184">
    <property type="taxonomic scope" value="Bacteria"/>
</dbReference>
<dbReference type="HOGENOM" id="CLU_148518_0_0_6"/>
<dbReference type="OrthoDB" id="9799262at2"/>
<dbReference type="Proteomes" id="UP000009175">
    <property type="component" value="Chromosome"/>
</dbReference>
<dbReference type="GO" id="GO:0022627">
    <property type="term" value="C:cytosolic small ribosomal subunit"/>
    <property type="evidence" value="ECO:0007669"/>
    <property type="project" value="TreeGrafter"/>
</dbReference>
<dbReference type="GO" id="GO:0019843">
    <property type="term" value="F:rRNA binding"/>
    <property type="evidence" value="ECO:0007669"/>
    <property type="project" value="UniProtKB-UniRule"/>
</dbReference>
<dbReference type="GO" id="GO:0003735">
    <property type="term" value="F:structural constituent of ribosome"/>
    <property type="evidence" value="ECO:0007669"/>
    <property type="project" value="InterPro"/>
</dbReference>
<dbReference type="GO" id="GO:0006412">
    <property type="term" value="P:translation"/>
    <property type="evidence" value="ECO:0007669"/>
    <property type="project" value="UniProtKB-UniRule"/>
</dbReference>
<dbReference type="CDD" id="cd00353">
    <property type="entry name" value="Ribosomal_S15p_S13e"/>
    <property type="match status" value="1"/>
</dbReference>
<dbReference type="FunFam" id="1.10.287.10:FF:000002">
    <property type="entry name" value="30S ribosomal protein S15"/>
    <property type="match status" value="1"/>
</dbReference>
<dbReference type="Gene3D" id="6.10.250.3130">
    <property type="match status" value="1"/>
</dbReference>
<dbReference type="Gene3D" id="1.10.287.10">
    <property type="entry name" value="S15/NS1, RNA-binding"/>
    <property type="match status" value="1"/>
</dbReference>
<dbReference type="HAMAP" id="MF_01343_B">
    <property type="entry name" value="Ribosomal_uS15_B"/>
    <property type="match status" value="1"/>
</dbReference>
<dbReference type="InterPro" id="IPR000589">
    <property type="entry name" value="Ribosomal_uS15"/>
</dbReference>
<dbReference type="InterPro" id="IPR005290">
    <property type="entry name" value="Ribosomal_uS15_bac-type"/>
</dbReference>
<dbReference type="InterPro" id="IPR009068">
    <property type="entry name" value="uS15_NS1_RNA-bd_sf"/>
</dbReference>
<dbReference type="NCBIfam" id="TIGR00952">
    <property type="entry name" value="S15_bact"/>
    <property type="match status" value="1"/>
</dbReference>
<dbReference type="PANTHER" id="PTHR23321">
    <property type="entry name" value="RIBOSOMAL PROTEIN S15, BACTERIAL AND ORGANELLAR"/>
    <property type="match status" value="1"/>
</dbReference>
<dbReference type="PANTHER" id="PTHR23321:SF26">
    <property type="entry name" value="SMALL RIBOSOMAL SUBUNIT PROTEIN US15M"/>
    <property type="match status" value="1"/>
</dbReference>
<dbReference type="Pfam" id="PF00312">
    <property type="entry name" value="Ribosomal_S15"/>
    <property type="match status" value="1"/>
</dbReference>
<dbReference type="SMART" id="SM01387">
    <property type="entry name" value="Ribosomal_S15"/>
    <property type="match status" value="1"/>
</dbReference>
<dbReference type="SUPFAM" id="SSF47060">
    <property type="entry name" value="S15/NS1 RNA-binding domain"/>
    <property type="match status" value="1"/>
</dbReference>
<dbReference type="PROSITE" id="PS00362">
    <property type="entry name" value="RIBOSOMAL_S15"/>
    <property type="match status" value="1"/>
</dbReference>
<sequence length="89" mass="10293">MSLSTEAKAKILAEFGRGENDTGSTEVQVALLTAQINHLQDHFKTHIHDHHSRRGLLRMVSSRRKLLSYLQRTENERYNALIQKLGLRR</sequence>
<reference key="1">
    <citation type="submission" date="2006-12" db="EMBL/GenBank/DDBJ databases">
        <title>Complete sequence of Shewanella amazonensis SB2B.</title>
        <authorList>
            <consortium name="US DOE Joint Genome Institute"/>
            <person name="Copeland A."/>
            <person name="Lucas S."/>
            <person name="Lapidus A."/>
            <person name="Barry K."/>
            <person name="Detter J.C."/>
            <person name="Glavina del Rio T."/>
            <person name="Hammon N."/>
            <person name="Israni S."/>
            <person name="Dalin E."/>
            <person name="Tice H."/>
            <person name="Pitluck S."/>
            <person name="Munk A.C."/>
            <person name="Brettin T."/>
            <person name="Bruce D."/>
            <person name="Han C."/>
            <person name="Tapia R."/>
            <person name="Gilna P."/>
            <person name="Schmutz J."/>
            <person name="Larimer F."/>
            <person name="Land M."/>
            <person name="Hauser L."/>
            <person name="Kyrpides N."/>
            <person name="Mikhailova N."/>
            <person name="Fredrickson J."/>
            <person name="Richardson P."/>
        </authorList>
    </citation>
    <scope>NUCLEOTIDE SEQUENCE [LARGE SCALE GENOMIC DNA]</scope>
    <source>
        <strain>ATCC BAA-1098 / SB2B</strain>
    </source>
</reference>
<evidence type="ECO:0000255" key="1">
    <source>
        <dbReference type="HAMAP-Rule" id="MF_01343"/>
    </source>
</evidence>
<evidence type="ECO:0000305" key="2"/>
<accession>A1S465</accession>
<protein>
    <recommendedName>
        <fullName evidence="1">Small ribosomal subunit protein uS15</fullName>
    </recommendedName>
    <alternativeName>
        <fullName evidence="2">30S ribosomal protein S15</fullName>
    </alternativeName>
</protein>
<proteinExistence type="inferred from homology"/>
<organism>
    <name type="scientific">Shewanella amazonensis (strain ATCC BAA-1098 / SB2B)</name>
    <dbReference type="NCBI Taxonomy" id="326297"/>
    <lineage>
        <taxon>Bacteria</taxon>
        <taxon>Pseudomonadati</taxon>
        <taxon>Pseudomonadota</taxon>
        <taxon>Gammaproteobacteria</taxon>
        <taxon>Alteromonadales</taxon>
        <taxon>Shewanellaceae</taxon>
        <taxon>Shewanella</taxon>
    </lineage>
</organism>
<name>RS15_SHEAM</name>
<comment type="function">
    <text evidence="1">One of the primary rRNA binding proteins, it binds directly to 16S rRNA where it helps nucleate assembly of the platform of the 30S subunit by binding and bridging several RNA helices of the 16S rRNA.</text>
</comment>
<comment type="function">
    <text evidence="1">Forms an intersubunit bridge (bridge B4) with the 23S rRNA of the 50S subunit in the ribosome.</text>
</comment>
<comment type="subunit">
    <text evidence="1">Part of the 30S ribosomal subunit. Forms a bridge to the 50S subunit in the 70S ribosome, contacting the 23S rRNA.</text>
</comment>
<comment type="similarity">
    <text evidence="1">Belongs to the universal ribosomal protein uS15 family.</text>
</comment>
<gene>
    <name evidence="1" type="primary">rpsO</name>
    <name type="ordered locus">Sama_0964</name>
</gene>
<feature type="chain" id="PRO_1000054864" description="Small ribosomal subunit protein uS15">
    <location>
        <begin position="1"/>
        <end position="89"/>
    </location>
</feature>
<keyword id="KW-1185">Reference proteome</keyword>
<keyword id="KW-0687">Ribonucleoprotein</keyword>
<keyword id="KW-0689">Ribosomal protein</keyword>
<keyword id="KW-0694">RNA-binding</keyword>
<keyword id="KW-0699">rRNA-binding</keyword>